<keyword id="KW-0963">Cytoplasm</keyword>
<keyword id="KW-0488">Methylation</keyword>
<keyword id="KW-0648">Protein biosynthesis</keyword>
<keyword id="KW-1185">Reference proteome</keyword>
<feature type="chain" id="PRO_0000177665" description="Peptide chain release factor 1">
    <location>
        <begin position="1"/>
        <end position="375"/>
    </location>
</feature>
<feature type="region of interest" description="Disordered" evidence="2">
    <location>
        <begin position="289"/>
        <end position="326"/>
    </location>
</feature>
<feature type="compositionally biased region" description="Basic and acidic residues" evidence="2">
    <location>
        <begin position="289"/>
        <end position="299"/>
    </location>
</feature>
<feature type="modified residue" description="N5-methylglutamine" evidence="1">
    <location>
        <position position="237"/>
    </location>
</feature>
<sequence>MANMSRLNELVSEFGLVERRLGDPQALADGREYARLTRRHRELLPLVTLVREREQAEADLSGARELLQDPDMRDPDMKELAQLEVGGLQARLAEIEAELEVLLLPTDPDDGKDVILELRAGAGGAEAGLFVMDLLRMYERYAAGLNLKLNVLDAAESDLGGASKVVAEVTGDFAFRALKWERGVHRVQRVPATESQGRIHTSTATVAVLPEAEPGEVNLDLSEVRIDVFRSQGAGGQGVNTTDSAVRAVYRAGTPDEIMVICQDGRSQIKNREKALQVLTARLAERERAAREAQERQERASQVGSGDRSEKIRTYNYPQNRVTDHRLEGEDKNHPLDAVMAGGLAPVVSALARAQREEQLLAMSQEGAEDQHGAA</sequence>
<proteinExistence type="inferred from homology"/>
<protein>
    <recommendedName>
        <fullName>Peptide chain release factor 1</fullName>
        <shortName>RF-1</shortName>
    </recommendedName>
</protein>
<evidence type="ECO:0000250" key="1"/>
<evidence type="ECO:0000256" key="2">
    <source>
        <dbReference type="SAM" id="MobiDB-lite"/>
    </source>
</evidence>
<evidence type="ECO:0000305" key="3"/>
<comment type="function">
    <text evidence="1">Peptide chain release factor 1 directs the termination of translation in response to the peptide chain termination codons UAG and UAA.</text>
</comment>
<comment type="subcellular location">
    <subcellularLocation>
        <location evidence="1">Cytoplasm</location>
    </subcellularLocation>
</comment>
<comment type="PTM">
    <text evidence="1">Methylated by PrmC. Methylation increases the termination efficiency of RF1 (By similarity).</text>
</comment>
<comment type="similarity">
    <text evidence="3">Belongs to the prokaryotic/mitochondrial release factor family.</text>
</comment>
<reference key="1">
    <citation type="journal article" date="1999" name="Science">
        <title>Genome sequence of the radioresistant bacterium Deinococcus radiodurans R1.</title>
        <authorList>
            <person name="White O."/>
            <person name="Eisen J.A."/>
            <person name="Heidelberg J.F."/>
            <person name="Hickey E.K."/>
            <person name="Peterson J.D."/>
            <person name="Dodson R.J."/>
            <person name="Haft D.H."/>
            <person name="Gwinn M.L."/>
            <person name="Nelson W.C."/>
            <person name="Richardson D.L."/>
            <person name="Moffat K.S."/>
            <person name="Qin H."/>
            <person name="Jiang L."/>
            <person name="Pamphile W."/>
            <person name="Crosby M."/>
            <person name="Shen M."/>
            <person name="Vamathevan J.J."/>
            <person name="Lam P."/>
            <person name="McDonald L.A."/>
            <person name="Utterback T.R."/>
            <person name="Zalewski C."/>
            <person name="Makarova K.S."/>
            <person name="Aravind L."/>
            <person name="Daly M.J."/>
            <person name="Minton K.W."/>
            <person name="Fleischmann R.D."/>
            <person name="Ketchum K.A."/>
            <person name="Nelson K.E."/>
            <person name="Salzberg S.L."/>
            <person name="Smith H.O."/>
            <person name="Venter J.C."/>
            <person name="Fraser C.M."/>
        </authorList>
    </citation>
    <scope>NUCLEOTIDE SEQUENCE [LARGE SCALE GENOMIC DNA]</scope>
    <source>
        <strain>ATCC 13939 / DSM 20539 / JCM 16871 / CCUG 27074 / LMG 4051 / NBRC 15346 / NCIMB 9279 / VKM B-1422 / R1</strain>
    </source>
</reference>
<organism>
    <name type="scientific">Deinococcus radiodurans (strain ATCC 13939 / DSM 20539 / JCM 16871 / CCUG 27074 / LMG 4051 / NBRC 15346 / NCIMB 9279 / VKM B-1422 / R1)</name>
    <dbReference type="NCBI Taxonomy" id="243230"/>
    <lineage>
        <taxon>Bacteria</taxon>
        <taxon>Thermotogati</taxon>
        <taxon>Deinococcota</taxon>
        <taxon>Deinococci</taxon>
        <taxon>Deinococcales</taxon>
        <taxon>Deinococcaceae</taxon>
        <taxon>Deinococcus</taxon>
    </lineage>
</organism>
<gene>
    <name type="primary">prfA</name>
    <name type="ordered locus">DR_0976</name>
</gene>
<dbReference type="EMBL" id="AE000513">
    <property type="protein sequence ID" value="AAF10553.1"/>
    <property type="molecule type" value="Genomic_DNA"/>
</dbReference>
<dbReference type="PIR" id="C75452">
    <property type="entry name" value="C75452"/>
</dbReference>
<dbReference type="RefSeq" id="NP_294700.1">
    <property type="nucleotide sequence ID" value="NC_001263.1"/>
</dbReference>
<dbReference type="SMR" id="P56905"/>
<dbReference type="FunCoup" id="P56905">
    <property type="interactions" value="430"/>
</dbReference>
<dbReference type="STRING" id="243230.DR_0976"/>
<dbReference type="PaxDb" id="243230-DR_0976"/>
<dbReference type="EnsemblBacteria" id="AAF10553">
    <property type="protein sequence ID" value="AAF10553"/>
    <property type="gene ID" value="DR_0976"/>
</dbReference>
<dbReference type="KEGG" id="dra:DR_0976"/>
<dbReference type="PATRIC" id="fig|243230.17.peg.1163"/>
<dbReference type="eggNOG" id="COG0216">
    <property type="taxonomic scope" value="Bacteria"/>
</dbReference>
<dbReference type="HOGENOM" id="CLU_036856_0_1_0"/>
<dbReference type="InParanoid" id="P56905"/>
<dbReference type="OrthoDB" id="9806673at2"/>
<dbReference type="Proteomes" id="UP000002524">
    <property type="component" value="Chromosome 1"/>
</dbReference>
<dbReference type="GO" id="GO:0005737">
    <property type="term" value="C:cytoplasm"/>
    <property type="evidence" value="ECO:0007669"/>
    <property type="project" value="UniProtKB-SubCell"/>
</dbReference>
<dbReference type="GO" id="GO:0016149">
    <property type="term" value="F:translation release factor activity, codon specific"/>
    <property type="evidence" value="ECO:0007669"/>
    <property type="project" value="UniProtKB-UniRule"/>
</dbReference>
<dbReference type="FunFam" id="3.30.160.20:FF:000004">
    <property type="entry name" value="Peptide chain release factor 1"/>
    <property type="match status" value="1"/>
</dbReference>
<dbReference type="FunFam" id="3.30.70.1660:FF:000002">
    <property type="entry name" value="Peptide chain release factor 1"/>
    <property type="match status" value="1"/>
</dbReference>
<dbReference type="Gene3D" id="3.30.160.20">
    <property type="match status" value="1"/>
</dbReference>
<dbReference type="Gene3D" id="3.30.70.1660">
    <property type="match status" value="2"/>
</dbReference>
<dbReference type="Gene3D" id="6.10.140.1950">
    <property type="match status" value="1"/>
</dbReference>
<dbReference type="HAMAP" id="MF_00093">
    <property type="entry name" value="Rel_fac_1"/>
    <property type="match status" value="1"/>
</dbReference>
<dbReference type="InterPro" id="IPR005139">
    <property type="entry name" value="PCRF"/>
</dbReference>
<dbReference type="InterPro" id="IPR000352">
    <property type="entry name" value="Pep_chain_release_fac_I"/>
</dbReference>
<dbReference type="InterPro" id="IPR045853">
    <property type="entry name" value="Pep_chain_release_fac_I_sf"/>
</dbReference>
<dbReference type="InterPro" id="IPR050057">
    <property type="entry name" value="Prokaryotic/Mito_RF"/>
</dbReference>
<dbReference type="InterPro" id="IPR004373">
    <property type="entry name" value="RF-1"/>
</dbReference>
<dbReference type="NCBIfam" id="NF001859">
    <property type="entry name" value="PRK00591.1"/>
    <property type="match status" value="1"/>
</dbReference>
<dbReference type="PANTHER" id="PTHR43804">
    <property type="entry name" value="LD18447P"/>
    <property type="match status" value="1"/>
</dbReference>
<dbReference type="PANTHER" id="PTHR43804:SF7">
    <property type="entry name" value="LD18447P"/>
    <property type="match status" value="1"/>
</dbReference>
<dbReference type="Pfam" id="PF03462">
    <property type="entry name" value="PCRF"/>
    <property type="match status" value="1"/>
</dbReference>
<dbReference type="Pfam" id="PF00472">
    <property type="entry name" value="RF-1"/>
    <property type="match status" value="1"/>
</dbReference>
<dbReference type="SMART" id="SM00937">
    <property type="entry name" value="PCRF"/>
    <property type="match status" value="1"/>
</dbReference>
<dbReference type="SUPFAM" id="SSF75620">
    <property type="entry name" value="Release factor"/>
    <property type="match status" value="1"/>
</dbReference>
<dbReference type="PROSITE" id="PS00745">
    <property type="entry name" value="RF_PROK_I"/>
    <property type="match status" value="1"/>
</dbReference>
<accession>P56905</accession>
<name>RF1_DEIRA</name>